<gene>
    <name type="primary">CLAH10</name>
    <name type="synonym">CLAH3</name>
</gene>
<dbReference type="EC" id="1.2.1.3"/>
<dbReference type="EMBL" id="X78228">
    <property type="protein sequence ID" value="CAA55072.2"/>
    <property type="molecule type" value="mRNA"/>
</dbReference>
<dbReference type="PIR" id="S43114">
    <property type="entry name" value="S43114"/>
</dbReference>
<dbReference type="PDB" id="7KQV">
    <property type="method" value="X-ray"/>
    <property type="resolution" value="3.18 A"/>
    <property type="chains" value="A/B/C/D=1-496"/>
</dbReference>
<dbReference type="PDBsum" id="7KQV"/>
<dbReference type="SMR" id="P40108"/>
<dbReference type="Allergome" id="218">
    <property type="allergen name" value="Cla h 10"/>
</dbReference>
<dbReference type="Allergome" id="3201">
    <property type="allergen name" value="Cla h 10.0101"/>
</dbReference>
<dbReference type="GO" id="GO:0005737">
    <property type="term" value="C:cytoplasm"/>
    <property type="evidence" value="ECO:0007669"/>
    <property type="project" value="UniProtKB-SubCell"/>
</dbReference>
<dbReference type="GO" id="GO:0004029">
    <property type="term" value="F:aldehyde dehydrogenase (NAD+) activity"/>
    <property type="evidence" value="ECO:0007669"/>
    <property type="project" value="UniProtKB-EC"/>
</dbReference>
<dbReference type="CDD" id="cd07091">
    <property type="entry name" value="ALDH_F1-2_Ald2-like"/>
    <property type="match status" value="1"/>
</dbReference>
<dbReference type="FunFam" id="3.40.605.10:FF:000050">
    <property type="entry name" value="Aldehyde dehydrogenase, mitochondrial"/>
    <property type="match status" value="1"/>
</dbReference>
<dbReference type="FunFam" id="3.40.605.10:FF:000026">
    <property type="entry name" value="Aldehyde dehydrogenase, putative"/>
    <property type="match status" value="1"/>
</dbReference>
<dbReference type="FunFam" id="3.40.309.10:FF:000001">
    <property type="entry name" value="Mitochondrial aldehyde dehydrogenase 2"/>
    <property type="match status" value="1"/>
</dbReference>
<dbReference type="Gene3D" id="3.40.605.10">
    <property type="entry name" value="Aldehyde Dehydrogenase, Chain A, domain 1"/>
    <property type="match status" value="1"/>
</dbReference>
<dbReference type="Gene3D" id="3.40.309.10">
    <property type="entry name" value="Aldehyde Dehydrogenase, Chain A, domain 2"/>
    <property type="match status" value="1"/>
</dbReference>
<dbReference type="InterPro" id="IPR016161">
    <property type="entry name" value="Ald_DH/histidinol_DH"/>
</dbReference>
<dbReference type="InterPro" id="IPR016163">
    <property type="entry name" value="Ald_DH_C"/>
</dbReference>
<dbReference type="InterPro" id="IPR016160">
    <property type="entry name" value="Ald_DH_CS_CYS"/>
</dbReference>
<dbReference type="InterPro" id="IPR029510">
    <property type="entry name" value="Ald_DH_CS_GLU"/>
</dbReference>
<dbReference type="InterPro" id="IPR016162">
    <property type="entry name" value="Ald_DH_N"/>
</dbReference>
<dbReference type="InterPro" id="IPR015590">
    <property type="entry name" value="Aldehyde_DH_dom"/>
</dbReference>
<dbReference type="PANTHER" id="PTHR11699">
    <property type="entry name" value="ALDEHYDE DEHYDROGENASE-RELATED"/>
    <property type="match status" value="1"/>
</dbReference>
<dbReference type="Pfam" id="PF00171">
    <property type="entry name" value="Aldedh"/>
    <property type="match status" value="1"/>
</dbReference>
<dbReference type="SUPFAM" id="SSF53720">
    <property type="entry name" value="ALDH-like"/>
    <property type="match status" value="1"/>
</dbReference>
<dbReference type="PROSITE" id="PS00070">
    <property type="entry name" value="ALDEHYDE_DEHYDR_CYS"/>
    <property type="match status" value="1"/>
</dbReference>
<dbReference type="PROSITE" id="PS00687">
    <property type="entry name" value="ALDEHYDE_DEHYDR_GLU"/>
    <property type="match status" value="1"/>
</dbReference>
<reference key="1">
    <citation type="journal article" date="1995" name="Mol. Immunol.">
        <title>Molecular cloning of major and minor allergens of Alternaria alternata and Cladosporium herbarum.</title>
        <authorList>
            <person name="Achatz G."/>
            <person name="Oberkofler H."/>
            <person name="Lechenauer E."/>
            <person name="Simon-Nobbe B."/>
            <person name="Unger A."/>
            <person name="Kandler D."/>
            <person name="Ebner C."/>
            <person name="Prillinger H."/>
            <person name="Kraft D."/>
            <person name="Breitenbach M."/>
        </authorList>
    </citation>
    <scope>NUCLEOTIDE SEQUENCE [MRNA]</scope>
    <scope>ALLERGEN</scope>
    <source>
        <strain>280202-Berlin</strain>
    </source>
</reference>
<reference key="2">
    <citation type="submission" date="2005-09" db="EMBL/GenBank/DDBJ databases">
        <authorList>
            <person name="Simon-Nobbe B."/>
        </authorList>
    </citation>
    <scope>SEQUENCE REVISION TO 66; 74; 95; 110; 114-121; 158-165 AND 367</scope>
</reference>
<sequence length="496" mass="53554">MTSVQLETPHSGKYEQPTGLFINNEFVKGQEGKTFDVINPSDESVITQVHEATEKDVDIAVAAARKAFEGSWRQETPENRGKLLNNLANLFEKNIDLLAAVESLDNGKAISMAKGDISMCVGCLRYYGGWADKITGKVIDTTPDTFNYVKKEPIGVCGQIIPWNFPLLMWAWKIGPAIACGNTVVLKTAEQTPLGGLVAASLVKEAGFPPGVINVISGFGKVAGAALSSHMDVDKVAFTGSTVVGRTILKAAASSNLKKVTLELGGKSPNIVFEDADIDNAISWVNFGIFFNHGQCCCAGSRVYVQESIYDKFVQKFKERAQKNVVGDPFAADTFQGPQVSKVQFDRIMEYIQAGKDAGATVETGGKRKGDKGYFIEPTIFSNVTEDMKIVKEEIFGPVCSIAKFKTKEDAIKLGNASTYGLAAAVHTKNLNTAIEVSNALKAGTVWVNTYNTLHHQMPFGGYKESGIGRELGEDALANYTQTKTVSIRLGDALFG</sequence>
<comment type="catalytic activity">
    <reaction>
        <text>an aldehyde + NAD(+) + H2O = a carboxylate + NADH + 2 H(+)</text>
        <dbReference type="Rhea" id="RHEA:16185"/>
        <dbReference type="ChEBI" id="CHEBI:15377"/>
        <dbReference type="ChEBI" id="CHEBI:15378"/>
        <dbReference type="ChEBI" id="CHEBI:17478"/>
        <dbReference type="ChEBI" id="CHEBI:29067"/>
        <dbReference type="ChEBI" id="CHEBI:57540"/>
        <dbReference type="ChEBI" id="CHEBI:57945"/>
        <dbReference type="EC" id="1.2.1.3"/>
    </reaction>
</comment>
<comment type="subcellular location">
    <subcellularLocation>
        <location evidence="3">Cytoplasm</location>
    </subcellularLocation>
</comment>
<comment type="allergen">
    <text evidence="2">Causes an allergic reaction in human.</text>
</comment>
<comment type="similarity">
    <text evidence="3">Belongs to the aldehyde dehydrogenase family.</text>
</comment>
<protein>
    <recommendedName>
        <fullName>Aldehyde dehydrogenase</fullName>
        <shortName>ALDDH</shortName>
        <shortName>ALDH</shortName>
        <ecNumber>1.2.1.3</ecNumber>
    </recommendedName>
    <alternativeName>
        <fullName>Allergen Cla h 3</fullName>
    </alternativeName>
    <alternativeName>
        <fullName>Allergen Cla h III</fullName>
    </alternativeName>
    <allergenName>Cla h 10</allergenName>
</protein>
<name>ALDH_DAVTA</name>
<keyword id="KW-0002">3D-structure</keyword>
<keyword id="KW-0020">Allergen</keyword>
<keyword id="KW-0963">Cytoplasm</keyword>
<keyword id="KW-0520">NAD</keyword>
<keyword id="KW-0560">Oxidoreductase</keyword>
<feature type="chain" id="PRO_0000056437" description="Aldehyde dehydrogenase">
    <location>
        <begin position="1"/>
        <end position="496"/>
    </location>
</feature>
<feature type="active site" evidence="1">
    <location>
        <position position="263"/>
    </location>
</feature>
<feature type="active site" evidence="1">
    <location>
        <position position="296"/>
    </location>
</feature>
<feature type="strand" evidence="4">
    <location>
        <begin position="23"/>
        <end position="27"/>
    </location>
</feature>
<feature type="strand" evidence="4">
    <location>
        <begin position="34"/>
        <end position="38"/>
    </location>
</feature>
<feature type="turn" evidence="4">
    <location>
        <begin position="40"/>
        <end position="42"/>
    </location>
</feature>
<feature type="strand" evidence="4">
    <location>
        <begin position="45"/>
        <end position="50"/>
    </location>
</feature>
<feature type="helix" evidence="4">
    <location>
        <begin position="54"/>
        <end position="68"/>
    </location>
</feature>
<feature type="turn" evidence="4">
    <location>
        <begin position="69"/>
        <end position="74"/>
    </location>
</feature>
<feature type="helix" evidence="4">
    <location>
        <begin position="77"/>
        <end position="93"/>
    </location>
</feature>
<feature type="helix" evidence="4">
    <location>
        <begin position="95"/>
        <end position="106"/>
    </location>
</feature>
<feature type="helix" evidence="4">
    <location>
        <begin position="110"/>
        <end position="113"/>
    </location>
</feature>
<feature type="helix" evidence="4">
    <location>
        <begin position="115"/>
        <end position="130"/>
    </location>
</feature>
<feature type="helix" evidence="4">
    <location>
        <begin position="131"/>
        <end position="133"/>
    </location>
</feature>
<feature type="strand" evidence="4">
    <location>
        <begin position="137"/>
        <end position="139"/>
    </location>
</feature>
<feature type="strand" evidence="4">
    <location>
        <begin position="142"/>
        <end position="144"/>
    </location>
</feature>
<feature type="strand" evidence="4">
    <location>
        <begin position="146"/>
        <end position="153"/>
    </location>
</feature>
<feature type="strand" evidence="4">
    <location>
        <begin position="157"/>
        <end position="160"/>
    </location>
</feature>
<feature type="strand" evidence="4">
    <location>
        <begin position="163"/>
        <end position="165"/>
    </location>
</feature>
<feature type="helix" evidence="4">
    <location>
        <begin position="166"/>
        <end position="180"/>
    </location>
</feature>
<feature type="strand" evidence="4">
    <location>
        <begin position="184"/>
        <end position="187"/>
    </location>
</feature>
<feature type="helix" evidence="4">
    <location>
        <begin position="194"/>
        <end position="205"/>
    </location>
</feature>
<feature type="strand" evidence="4">
    <location>
        <begin position="212"/>
        <end position="216"/>
    </location>
</feature>
<feature type="turn" evidence="4">
    <location>
        <begin position="220"/>
        <end position="222"/>
    </location>
</feature>
<feature type="helix" evidence="4">
    <location>
        <begin position="223"/>
        <end position="229"/>
    </location>
</feature>
<feature type="strand" evidence="4">
    <location>
        <begin position="235"/>
        <end position="240"/>
    </location>
</feature>
<feature type="helix" evidence="4">
    <location>
        <begin position="242"/>
        <end position="255"/>
    </location>
</feature>
<feature type="strand" evidence="4">
    <location>
        <begin position="259"/>
        <end position="263"/>
    </location>
</feature>
<feature type="strand" evidence="4">
    <location>
        <begin position="268"/>
        <end position="272"/>
    </location>
</feature>
<feature type="helix" evidence="4">
    <location>
        <begin position="278"/>
        <end position="290"/>
    </location>
</feature>
<feature type="helix" evidence="4">
    <location>
        <begin position="291"/>
        <end position="294"/>
    </location>
</feature>
<feature type="strand" evidence="4">
    <location>
        <begin position="300"/>
        <end position="306"/>
    </location>
</feature>
<feature type="turn" evidence="4">
    <location>
        <begin position="307"/>
        <end position="309"/>
    </location>
</feature>
<feature type="helix" evidence="4">
    <location>
        <begin position="310"/>
        <end position="317"/>
    </location>
</feature>
<feature type="strand" evidence="4">
    <location>
        <begin position="331"/>
        <end position="333"/>
    </location>
</feature>
<feature type="helix" evidence="4">
    <location>
        <begin position="342"/>
        <end position="357"/>
    </location>
</feature>
<feature type="strand" evidence="4">
    <location>
        <begin position="370"/>
        <end position="372"/>
    </location>
</feature>
<feature type="strand" evidence="4">
    <location>
        <begin position="379"/>
        <end position="383"/>
    </location>
</feature>
<feature type="helix" evidence="4">
    <location>
        <begin position="389"/>
        <end position="392"/>
    </location>
</feature>
<feature type="strand" evidence="4">
    <location>
        <begin position="397"/>
        <end position="405"/>
    </location>
</feature>
<feature type="helix" evidence="4">
    <location>
        <begin position="408"/>
        <end position="415"/>
    </location>
</feature>
<feature type="strand" evidence="4">
    <location>
        <begin position="424"/>
        <end position="427"/>
    </location>
</feature>
<feature type="helix" evidence="4">
    <location>
        <begin position="431"/>
        <end position="440"/>
    </location>
</feature>
<feature type="strand" evidence="4">
    <location>
        <begin position="443"/>
        <end position="449"/>
    </location>
</feature>
<feature type="strand" evidence="4">
    <location>
        <begin position="456"/>
        <end position="458"/>
    </location>
</feature>
<feature type="strand" evidence="4">
    <location>
        <begin position="463"/>
        <end position="469"/>
    </location>
</feature>
<feature type="helix" evidence="4">
    <location>
        <begin position="473"/>
        <end position="475"/>
    </location>
</feature>
<feature type="helix" evidence="4">
    <location>
        <begin position="476"/>
        <end position="479"/>
    </location>
</feature>
<feature type="strand" evidence="4">
    <location>
        <begin position="481"/>
        <end position="488"/>
    </location>
</feature>
<accession>P40108</accession>
<evidence type="ECO:0000250" key="1"/>
<evidence type="ECO:0000269" key="2">
    <source>
    </source>
</evidence>
<evidence type="ECO:0000305" key="3"/>
<evidence type="ECO:0007829" key="4">
    <source>
        <dbReference type="PDB" id="7KQV"/>
    </source>
</evidence>
<proteinExistence type="evidence at protein level"/>
<organism>
    <name type="scientific">Davidiella tassiana</name>
    <name type="common">Mycosphaerella tassiana</name>
    <name type="synonym">Cladosporium herbarum</name>
    <dbReference type="NCBI Taxonomy" id="29918"/>
    <lineage>
        <taxon>Eukaryota</taxon>
        <taxon>Fungi</taxon>
        <taxon>Dikarya</taxon>
        <taxon>Ascomycota</taxon>
        <taxon>Pezizomycotina</taxon>
        <taxon>Dothideomycetes</taxon>
        <taxon>Dothideomycetidae</taxon>
        <taxon>Cladosporiales</taxon>
        <taxon>Cladosporiaceae</taxon>
        <taxon>Cladosporium</taxon>
    </lineage>
</organism>